<accession>A6LEL8</accession>
<dbReference type="EC" id="3.6.1.27" evidence="1"/>
<dbReference type="EMBL" id="CP000140">
    <property type="protein sequence ID" value="ABR44132.1"/>
    <property type="molecule type" value="Genomic_DNA"/>
</dbReference>
<dbReference type="RefSeq" id="WP_008779927.1">
    <property type="nucleotide sequence ID" value="NZ_LR215978.1"/>
</dbReference>
<dbReference type="SMR" id="A6LEL8"/>
<dbReference type="STRING" id="435591.BDI_2407"/>
<dbReference type="PaxDb" id="435591-BDI_2407"/>
<dbReference type="KEGG" id="pdi:BDI_2407"/>
<dbReference type="eggNOG" id="COG1968">
    <property type="taxonomic scope" value="Bacteria"/>
</dbReference>
<dbReference type="HOGENOM" id="CLU_060296_1_2_10"/>
<dbReference type="BioCyc" id="PDIS435591:G1G5A-2474-MONOMER"/>
<dbReference type="Proteomes" id="UP000000566">
    <property type="component" value="Chromosome"/>
</dbReference>
<dbReference type="GO" id="GO:0005886">
    <property type="term" value="C:plasma membrane"/>
    <property type="evidence" value="ECO:0007669"/>
    <property type="project" value="UniProtKB-SubCell"/>
</dbReference>
<dbReference type="GO" id="GO:0050380">
    <property type="term" value="F:undecaprenyl-diphosphatase activity"/>
    <property type="evidence" value="ECO:0007669"/>
    <property type="project" value="UniProtKB-UniRule"/>
</dbReference>
<dbReference type="GO" id="GO:0071555">
    <property type="term" value="P:cell wall organization"/>
    <property type="evidence" value="ECO:0007669"/>
    <property type="project" value="UniProtKB-KW"/>
</dbReference>
<dbReference type="GO" id="GO:0009252">
    <property type="term" value="P:peptidoglycan biosynthetic process"/>
    <property type="evidence" value="ECO:0007669"/>
    <property type="project" value="UniProtKB-KW"/>
</dbReference>
<dbReference type="GO" id="GO:0008360">
    <property type="term" value="P:regulation of cell shape"/>
    <property type="evidence" value="ECO:0007669"/>
    <property type="project" value="UniProtKB-KW"/>
</dbReference>
<dbReference type="GO" id="GO:0046677">
    <property type="term" value="P:response to antibiotic"/>
    <property type="evidence" value="ECO:0007669"/>
    <property type="project" value="UniProtKB-UniRule"/>
</dbReference>
<dbReference type="HAMAP" id="MF_01006">
    <property type="entry name" value="Undec_diphosphatase"/>
    <property type="match status" value="1"/>
</dbReference>
<dbReference type="InterPro" id="IPR003824">
    <property type="entry name" value="UppP"/>
</dbReference>
<dbReference type="PANTHER" id="PTHR30622">
    <property type="entry name" value="UNDECAPRENYL-DIPHOSPHATASE"/>
    <property type="match status" value="1"/>
</dbReference>
<dbReference type="PANTHER" id="PTHR30622:SF2">
    <property type="entry name" value="UNDECAPRENYL-DIPHOSPHATASE"/>
    <property type="match status" value="1"/>
</dbReference>
<dbReference type="Pfam" id="PF02673">
    <property type="entry name" value="BacA"/>
    <property type="match status" value="1"/>
</dbReference>
<name>UPPP_PARD8</name>
<feature type="chain" id="PRO_0000303032" description="Undecaprenyl-diphosphatase">
    <location>
        <begin position="1"/>
        <end position="266"/>
    </location>
</feature>
<feature type="transmembrane region" description="Helical" evidence="1">
    <location>
        <begin position="41"/>
        <end position="61"/>
    </location>
</feature>
<feature type="transmembrane region" description="Helical" evidence="1">
    <location>
        <begin position="80"/>
        <end position="100"/>
    </location>
</feature>
<feature type="transmembrane region" description="Helical" evidence="1">
    <location>
        <begin position="107"/>
        <end position="127"/>
    </location>
</feature>
<feature type="transmembrane region" description="Helical" evidence="1">
    <location>
        <begin position="140"/>
        <end position="160"/>
    </location>
</feature>
<feature type="transmembrane region" description="Helical" evidence="1">
    <location>
        <begin position="180"/>
        <end position="200"/>
    </location>
</feature>
<feature type="transmembrane region" description="Helical" evidence="1">
    <location>
        <begin position="213"/>
        <end position="233"/>
    </location>
</feature>
<feature type="transmembrane region" description="Helical" evidence="1">
    <location>
        <begin position="245"/>
        <end position="265"/>
    </location>
</feature>
<proteinExistence type="inferred from homology"/>
<keyword id="KW-0046">Antibiotic resistance</keyword>
<keyword id="KW-0997">Cell inner membrane</keyword>
<keyword id="KW-1003">Cell membrane</keyword>
<keyword id="KW-0133">Cell shape</keyword>
<keyword id="KW-0961">Cell wall biogenesis/degradation</keyword>
<keyword id="KW-0378">Hydrolase</keyword>
<keyword id="KW-0472">Membrane</keyword>
<keyword id="KW-0573">Peptidoglycan synthesis</keyword>
<keyword id="KW-1185">Reference proteome</keyword>
<keyword id="KW-0812">Transmembrane</keyword>
<keyword id="KW-1133">Transmembrane helix</keyword>
<protein>
    <recommendedName>
        <fullName evidence="1">Undecaprenyl-diphosphatase</fullName>
        <ecNumber evidence="1">3.6.1.27</ecNumber>
    </recommendedName>
    <alternativeName>
        <fullName evidence="1">Bacitracin resistance protein</fullName>
    </alternativeName>
    <alternativeName>
        <fullName evidence="1">Undecaprenyl pyrophosphate phosphatase</fullName>
    </alternativeName>
</protein>
<reference key="1">
    <citation type="journal article" date="2007" name="PLoS Biol.">
        <title>Evolution of symbiotic bacteria in the distal human intestine.</title>
        <authorList>
            <person name="Xu J."/>
            <person name="Mahowald M.A."/>
            <person name="Ley R.E."/>
            <person name="Lozupone C.A."/>
            <person name="Hamady M."/>
            <person name="Martens E.C."/>
            <person name="Henrissat B."/>
            <person name="Coutinho P.M."/>
            <person name="Minx P."/>
            <person name="Latreille P."/>
            <person name="Cordum H."/>
            <person name="Van Brunt A."/>
            <person name="Kim K."/>
            <person name="Fulton R.S."/>
            <person name="Fulton L.A."/>
            <person name="Clifton S.W."/>
            <person name="Wilson R.K."/>
            <person name="Knight R.D."/>
            <person name="Gordon J.I."/>
        </authorList>
    </citation>
    <scope>NUCLEOTIDE SEQUENCE [LARGE SCALE GENOMIC DNA]</scope>
    <source>
        <strain>ATCC 8503 / DSM 20701 / CIP 104284 / JCM 5825 / NCTC 11152</strain>
    </source>
</reference>
<gene>
    <name evidence="1" type="primary">uppP</name>
    <name type="ordered locus">BDI_2407</name>
</gene>
<sequence length="266" mass="28577">MSWFEALILGIVQGLTEYLPVSSSGHLAIGSALFGIEGEENLAFTIVVHVATVFSTLVVLWKEIDWIFRGLFKFQMNAETKYVINILISMIPIGIVGVFFKDTVEQIFGSGLLVVGCMLLLTAALLAFSYYAKPRQKESISMKDAFIIGLAQACAVMPGLSRSGSTIATGLLLGNNKAKLAQFSFLMVIPPILGEALLDVMKMVKGEDVAGDIPALSLAVGFMAAFVSGCVACKWMINIVKKGKLIYFAIYCAIAGLVTIACTLLK</sequence>
<evidence type="ECO:0000255" key="1">
    <source>
        <dbReference type="HAMAP-Rule" id="MF_01006"/>
    </source>
</evidence>
<organism>
    <name type="scientific">Parabacteroides distasonis (strain ATCC 8503 / DSM 20701 / CIP 104284 / JCM 5825 / NCTC 11152)</name>
    <dbReference type="NCBI Taxonomy" id="435591"/>
    <lineage>
        <taxon>Bacteria</taxon>
        <taxon>Pseudomonadati</taxon>
        <taxon>Bacteroidota</taxon>
        <taxon>Bacteroidia</taxon>
        <taxon>Bacteroidales</taxon>
        <taxon>Tannerellaceae</taxon>
        <taxon>Parabacteroides</taxon>
    </lineage>
</organism>
<comment type="function">
    <text evidence="1">Catalyzes the dephosphorylation of undecaprenyl diphosphate (UPP). Confers resistance to bacitracin.</text>
</comment>
<comment type="catalytic activity">
    <reaction evidence="1">
        <text>di-trans,octa-cis-undecaprenyl diphosphate + H2O = di-trans,octa-cis-undecaprenyl phosphate + phosphate + H(+)</text>
        <dbReference type="Rhea" id="RHEA:28094"/>
        <dbReference type="ChEBI" id="CHEBI:15377"/>
        <dbReference type="ChEBI" id="CHEBI:15378"/>
        <dbReference type="ChEBI" id="CHEBI:43474"/>
        <dbReference type="ChEBI" id="CHEBI:58405"/>
        <dbReference type="ChEBI" id="CHEBI:60392"/>
        <dbReference type="EC" id="3.6.1.27"/>
    </reaction>
</comment>
<comment type="subcellular location">
    <subcellularLocation>
        <location evidence="1">Cell inner membrane</location>
        <topology evidence="1">Multi-pass membrane protein</topology>
    </subcellularLocation>
</comment>
<comment type="miscellaneous">
    <text>Bacitracin is thought to be involved in the inhibition of peptidoglycan synthesis by sequestering undecaprenyl diphosphate, thereby reducing the pool of lipid carrier available.</text>
</comment>
<comment type="similarity">
    <text evidence="1">Belongs to the UppP family.</text>
</comment>